<feature type="transit peptide" description="Chloroplast" evidence="2">
    <location>
        <begin position="1"/>
        <end position="82"/>
    </location>
</feature>
<feature type="chain" id="PRO_0000002831" description="Biotin carboxyl carrier protein of acetyl-CoA carboxylase 1, chloroplastic">
    <location>
        <begin position="83"/>
        <end position="280"/>
    </location>
</feature>
<feature type="domain" description="Biotinyl-binding" evidence="3">
    <location>
        <begin position="203"/>
        <end position="279"/>
    </location>
</feature>
<feature type="region of interest" description="Disordered" evidence="4">
    <location>
        <begin position="52"/>
        <end position="106"/>
    </location>
</feature>
<feature type="region of interest" description="Disordered" evidence="4">
    <location>
        <begin position="164"/>
        <end position="215"/>
    </location>
</feature>
<feature type="compositionally biased region" description="Polar residues" evidence="4">
    <location>
        <begin position="52"/>
        <end position="75"/>
    </location>
</feature>
<feature type="compositionally biased region" description="Low complexity" evidence="4">
    <location>
        <begin position="177"/>
        <end position="188"/>
    </location>
</feature>
<feature type="compositionally biased region" description="Pro residues" evidence="4">
    <location>
        <begin position="189"/>
        <end position="198"/>
    </location>
</feature>
<feature type="modified residue" description="N6-biotinyllysine" evidence="1 3">
    <location>
        <position position="245"/>
    </location>
</feature>
<feature type="sequence conflict" description="In Ref. 2." evidence="8" ref="2">
    <original>KPVSLDTPLFVVQP</original>
    <variation>SLSASTLLCLWFN</variation>
    <location>
        <begin position="267"/>
        <end position="280"/>
    </location>
</feature>
<feature type="sequence conflict" description="In Ref. 1; AAC49114." evidence="8" ref="1">
    <original>P</original>
    <variation>PVESAP</variation>
    <location>
        <position position="280"/>
    </location>
</feature>
<dbReference type="EMBL" id="U23155">
    <property type="protein sequence ID" value="AAC49114.1"/>
    <property type="molecule type" value="mRNA"/>
</dbReference>
<dbReference type="EMBL" id="U62029">
    <property type="protein sequence ID" value="AAB51193.1"/>
    <property type="molecule type" value="Genomic_DNA"/>
</dbReference>
<dbReference type="EMBL" id="AF236873">
    <property type="protein sequence ID" value="AAF80594.1"/>
    <property type="molecule type" value="mRNA"/>
</dbReference>
<dbReference type="EMBL" id="AB005242">
    <property type="protein sequence ID" value="BAB09606.1"/>
    <property type="molecule type" value="Genomic_DNA"/>
</dbReference>
<dbReference type="EMBL" id="CP002688">
    <property type="protein sequence ID" value="AED92286.1"/>
    <property type="molecule type" value="Genomic_DNA"/>
</dbReference>
<dbReference type="EMBL" id="AY054617">
    <property type="protein sequence ID" value="AAK96808.1"/>
    <property type="molecule type" value="mRNA"/>
</dbReference>
<dbReference type="EMBL" id="AY072460">
    <property type="protein sequence ID" value="AAL66875.1"/>
    <property type="molecule type" value="mRNA"/>
</dbReference>
<dbReference type="EMBL" id="AY087857">
    <property type="protein sequence ID" value="AAM65409.1"/>
    <property type="molecule type" value="mRNA"/>
</dbReference>
<dbReference type="RefSeq" id="NP_197143.1">
    <molecule id="Q42533-1"/>
    <property type="nucleotide sequence ID" value="NM_121644.4"/>
</dbReference>
<dbReference type="SMR" id="Q42533"/>
<dbReference type="BioGRID" id="16776">
    <property type="interactions" value="1"/>
</dbReference>
<dbReference type="DIP" id="DIP-58514N"/>
<dbReference type="FunCoup" id="Q42533">
    <property type="interactions" value="594"/>
</dbReference>
<dbReference type="IntAct" id="Q42533">
    <property type="interactions" value="1"/>
</dbReference>
<dbReference type="STRING" id="3702.Q42533"/>
<dbReference type="GlyGen" id="Q42533">
    <property type="glycosylation" value="2 sites"/>
</dbReference>
<dbReference type="iPTMnet" id="Q42533"/>
<dbReference type="PaxDb" id="3702-AT5G16390.1"/>
<dbReference type="ProteomicsDB" id="240649">
    <molecule id="Q42533-1"/>
</dbReference>
<dbReference type="EnsemblPlants" id="AT5G16390.1">
    <molecule id="Q42533-1"/>
    <property type="protein sequence ID" value="AT5G16390.1"/>
    <property type="gene ID" value="AT5G16390"/>
</dbReference>
<dbReference type="GeneID" id="831500"/>
<dbReference type="Gramene" id="AT5G16390.1">
    <molecule id="Q42533-1"/>
    <property type="protein sequence ID" value="AT5G16390.1"/>
    <property type="gene ID" value="AT5G16390"/>
</dbReference>
<dbReference type="KEGG" id="ath:AT5G16390"/>
<dbReference type="Araport" id="AT5G16390"/>
<dbReference type="TAIR" id="AT5G16390">
    <property type="gene designation" value="CAC1"/>
</dbReference>
<dbReference type="eggNOG" id="ENOG502QUI2">
    <property type="taxonomic scope" value="Eukaryota"/>
</dbReference>
<dbReference type="HOGENOM" id="CLU_016733_1_0_1"/>
<dbReference type="InParanoid" id="Q42533"/>
<dbReference type="OMA" id="WFSLEDH"/>
<dbReference type="OrthoDB" id="196847at2759"/>
<dbReference type="PhylomeDB" id="Q42533"/>
<dbReference type="BioCyc" id="ARA:AT5G16390-MONOMER"/>
<dbReference type="BioCyc" id="MetaCyc:AT5G16390-MONOMER"/>
<dbReference type="UniPathway" id="UPA00094"/>
<dbReference type="CD-CODE" id="4299E36E">
    <property type="entry name" value="Nucleolus"/>
</dbReference>
<dbReference type="PRO" id="PR:Q42533"/>
<dbReference type="Proteomes" id="UP000006548">
    <property type="component" value="Chromosome 5"/>
</dbReference>
<dbReference type="ExpressionAtlas" id="Q42533">
    <property type="expression patterns" value="baseline and differential"/>
</dbReference>
<dbReference type="GO" id="GO:0009317">
    <property type="term" value="C:acetyl-CoA carboxylase complex"/>
    <property type="evidence" value="ECO:0007669"/>
    <property type="project" value="InterPro"/>
</dbReference>
<dbReference type="GO" id="GO:0009507">
    <property type="term" value="C:chloroplast"/>
    <property type="evidence" value="ECO:0007005"/>
    <property type="project" value="TAIR"/>
</dbReference>
<dbReference type="GO" id="GO:0009941">
    <property type="term" value="C:chloroplast envelope"/>
    <property type="evidence" value="ECO:0007005"/>
    <property type="project" value="TAIR"/>
</dbReference>
<dbReference type="GO" id="GO:0009570">
    <property type="term" value="C:chloroplast stroma"/>
    <property type="evidence" value="ECO:0007005"/>
    <property type="project" value="TAIR"/>
</dbReference>
<dbReference type="GO" id="GO:0009536">
    <property type="term" value="C:plastid"/>
    <property type="evidence" value="ECO:0007005"/>
    <property type="project" value="TAIR"/>
</dbReference>
<dbReference type="GO" id="GO:0003989">
    <property type="term" value="F:acetyl-CoA carboxylase activity"/>
    <property type="evidence" value="ECO:0000314"/>
    <property type="project" value="TAIR"/>
</dbReference>
<dbReference type="GO" id="GO:0006633">
    <property type="term" value="P:fatty acid biosynthetic process"/>
    <property type="evidence" value="ECO:0000304"/>
    <property type="project" value="TAIR"/>
</dbReference>
<dbReference type="CDD" id="cd06850">
    <property type="entry name" value="biotinyl_domain"/>
    <property type="match status" value="1"/>
</dbReference>
<dbReference type="FunFam" id="2.40.50.100:FF:000003">
    <property type="entry name" value="Acetyl-CoA carboxylase biotin carboxyl carrier protein"/>
    <property type="match status" value="1"/>
</dbReference>
<dbReference type="Gene3D" id="2.40.50.100">
    <property type="match status" value="1"/>
</dbReference>
<dbReference type="InterPro" id="IPR050537">
    <property type="entry name" value="2-oxoacid_dehydrogenase"/>
</dbReference>
<dbReference type="InterPro" id="IPR001249">
    <property type="entry name" value="AcCoA_biotinCC"/>
</dbReference>
<dbReference type="InterPro" id="IPR001882">
    <property type="entry name" value="Biotin_BS"/>
</dbReference>
<dbReference type="InterPro" id="IPR000089">
    <property type="entry name" value="Biotin_lipoyl"/>
</dbReference>
<dbReference type="InterPro" id="IPR011053">
    <property type="entry name" value="Single_hybrid_motif"/>
</dbReference>
<dbReference type="NCBIfam" id="TIGR00531">
    <property type="entry name" value="BCCP"/>
    <property type="match status" value="1"/>
</dbReference>
<dbReference type="PANTHER" id="PTHR43416:SF38">
    <property type="entry name" value="BIOTIN CARBOXYL CARRIER PROTEIN OF ACETYL-COA CARBOXYLASE 1, CHLOROPLASTIC"/>
    <property type="match status" value="1"/>
</dbReference>
<dbReference type="PANTHER" id="PTHR43416">
    <property type="entry name" value="DIHYDROLIPOYLLYSINE-RESIDUE SUCCINYLTRANSFERASE COMPONENT OF 2-OXOGLUTARATE DEHYDROGENASE COMPLEX, MITOCHONDRIAL-RELATED"/>
    <property type="match status" value="1"/>
</dbReference>
<dbReference type="Pfam" id="PF00364">
    <property type="entry name" value="Biotin_lipoyl"/>
    <property type="match status" value="1"/>
</dbReference>
<dbReference type="PRINTS" id="PR01071">
    <property type="entry name" value="ACOABIOTINCC"/>
</dbReference>
<dbReference type="SUPFAM" id="SSF51230">
    <property type="entry name" value="Single hybrid motif"/>
    <property type="match status" value="1"/>
</dbReference>
<dbReference type="PROSITE" id="PS00188">
    <property type="entry name" value="BIOTIN"/>
    <property type="match status" value="1"/>
</dbReference>
<dbReference type="PROSITE" id="PS50968">
    <property type="entry name" value="BIOTINYL_LIPOYL"/>
    <property type="match status" value="1"/>
</dbReference>
<comment type="function">
    <text>This protein is a component of the acetyl coenzyme A carboxylase complex; first, biotin carboxylase catalyzes the carboxylation of the carrier protein and then the transcarboxylase transfers the carboxyl group to form malonyl-CoA.</text>
</comment>
<comment type="pathway">
    <text>Lipid metabolism; fatty acid biosynthesis.</text>
</comment>
<comment type="subunit">
    <text>Acetyl-CoA carboxylase is a heterohexamer composed of biotin carboxyl carrier protein, biotin carboxylase and 2 subunits each of ACCase subunit alpha and ACCase plastid-coded subunit beta (accD).</text>
</comment>
<comment type="subcellular location">
    <subcellularLocation>
        <location evidence="6 7">Plastid</location>
        <location evidence="6 7">Chloroplast</location>
    </subcellularLocation>
</comment>
<comment type="alternative products">
    <event type="alternative splicing"/>
    <isoform>
        <id>Q42533-1</id>
        <name>1</name>
        <sequence type="displayed"/>
    </isoform>
    <text>A number of isoforms are produced. According to EST sequences.</text>
</comment>
<comment type="tissue specificity">
    <text evidence="5 6">Present in developing tissues from roots, leaves, flowers, siliques and seeds (at protein level).</text>
</comment>
<evidence type="ECO:0000250" key="1"/>
<evidence type="ECO:0000255" key="2"/>
<evidence type="ECO:0000255" key="3">
    <source>
        <dbReference type="PROSITE-ProRule" id="PRU01066"/>
    </source>
</evidence>
<evidence type="ECO:0000256" key="4">
    <source>
        <dbReference type="SAM" id="MobiDB-lite"/>
    </source>
</evidence>
<evidence type="ECO:0000269" key="5">
    <source>
    </source>
</evidence>
<evidence type="ECO:0000269" key="6">
    <source>
    </source>
</evidence>
<evidence type="ECO:0000269" key="7">
    <source>
    </source>
</evidence>
<evidence type="ECO:0000305" key="8"/>
<keyword id="KW-0025">Alternative splicing</keyword>
<keyword id="KW-0092">Biotin</keyword>
<keyword id="KW-0150">Chloroplast</keyword>
<keyword id="KW-0275">Fatty acid biosynthesis</keyword>
<keyword id="KW-0276">Fatty acid metabolism</keyword>
<keyword id="KW-0444">Lipid biosynthesis</keyword>
<keyword id="KW-0443">Lipid metabolism</keyword>
<keyword id="KW-0934">Plastid</keyword>
<keyword id="KW-1185">Reference proteome</keyword>
<keyword id="KW-0809">Transit peptide</keyword>
<name>BCCP1_ARATH</name>
<reference key="1">
    <citation type="journal article" date="1995" name="Plant Physiol.">
        <title>Molecular cloning and characterization of the cDNA coding for the biotin-containing subunit of the chloroplastic acetyl-coenzyme A carboxylase.</title>
        <authorList>
            <person name="Choi J.K."/>
            <person name="Yu F."/>
            <person name="Wurtele E.S."/>
            <person name="Nikolau B.J."/>
        </authorList>
    </citation>
    <scope>NUCLEOTIDE SEQUENCE [MRNA]</scope>
    <source>
        <strain>cv. Columbia</strain>
    </source>
</reference>
<reference key="2">
    <citation type="journal article" date="1997" name="Plant Physiol.">
        <title>Structure of the CAC1 gene and in situ characterization of its expression. The Arabidopsis thaliana gene coding for the biotin-containing subunit of the plastidic acetyl-coenzyme A carboxylase.</title>
        <authorList>
            <person name="Ke J."/>
            <person name="Choi J.K."/>
            <person name="Smith M."/>
            <person name="Horner H.T."/>
            <person name="Nikolau B.J."/>
            <person name="Wurtele E.S."/>
        </authorList>
    </citation>
    <scope>NUCLEOTIDE SEQUENCE [GENOMIC DNA]</scope>
</reference>
<reference key="3">
    <citation type="journal article" date="2001" name="Plant Physiol.">
        <title>Brassicaceae express multiple isoforms of biotin carboxyl carrier protein in a tissue-specific manner.</title>
        <authorList>
            <person name="Thelen J.J."/>
            <person name="Mekhedov S."/>
            <person name="Ohlrogge J.B."/>
        </authorList>
    </citation>
    <scope>NUCLEOTIDE SEQUENCE [MRNA]</scope>
    <scope>SUBCELLULAR LOCATION</scope>
    <scope>TISSUE SPECIFICITY</scope>
</reference>
<reference key="4">
    <citation type="journal article" date="1997" name="DNA Res.">
        <title>Structural analysis of Arabidopsis thaliana chromosome 5. I. Sequence features of the 1.6 Mb regions covered by twenty physically assigned P1 clones.</title>
        <authorList>
            <person name="Sato S."/>
            <person name="Kotani H."/>
            <person name="Nakamura Y."/>
            <person name="Kaneko T."/>
            <person name="Asamizu E."/>
            <person name="Fukami M."/>
            <person name="Miyajima N."/>
            <person name="Tabata S."/>
        </authorList>
    </citation>
    <scope>NUCLEOTIDE SEQUENCE [LARGE SCALE GENOMIC DNA]</scope>
    <source>
        <strain>cv. Columbia</strain>
    </source>
</reference>
<reference key="5">
    <citation type="journal article" date="2017" name="Plant J.">
        <title>Araport11: a complete reannotation of the Arabidopsis thaliana reference genome.</title>
        <authorList>
            <person name="Cheng C.Y."/>
            <person name="Krishnakumar V."/>
            <person name="Chan A.P."/>
            <person name="Thibaud-Nissen F."/>
            <person name="Schobel S."/>
            <person name="Town C.D."/>
        </authorList>
    </citation>
    <scope>GENOME REANNOTATION</scope>
    <source>
        <strain>cv. Columbia</strain>
    </source>
</reference>
<reference key="6">
    <citation type="journal article" date="2003" name="Science">
        <title>Empirical analysis of transcriptional activity in the Arabidopsis genome.</title>
        <authorList>
            <person name="Yamada K."/>
            <person name="Lim J."/>
            <person name="Dale J.M."/>
            <person name="Chen H."/>
            <person name="Shinn P."/>
            <person name="Palm C.J."/>
            <person name="Southwick A.M."/>
            <person name="Wu H.C."/>
            <person name="Kim C.J."/>
            <person name="Nguyen M."/>
            <person name="Pham P.K."/>
            <person name="Cheuk R.F."/>
            <person name="Karlin-Newmann G."/>
            <person name="Liu S.X."/>
            <person name="Lam B."/>
            <person name="Sakano H."/>
            <person name="Wu T."/>
            <person name="Yu G."/>
            <person name="Miranda M."/>
            <person name="Quach H.L."/>
            <person name="Tripp M."/>
            <person name="Chang C.H."/>
            <person name="Lee J.M."/>
            <person name="Toriumi M.J."/>
            <person name="Chan M.M."/>
            <person name="Tang C.C."/>
            <person name="Onodera C.S."/>
            <person name="Deng J.M."/>
            <person name="Akiyama K."/>
            <person name="Ansari Y."/>
            <person name="Arakawa T."/>
            <person name="Banh J."/>
            <person name="Banno F."/>
            <person name="Bowser L."/>
            <person name="Brooks S.Y."/>
            <person name="Carninci P."/>
            <person name="Chao Q."/>
            <person name="Choy N."/>
            <person name="Enju A."/>
            <person name="Goldsmith A.D."/>
            <person name="Gurjal M."/>
            <person name="Hansen N.F."/>
            <person name="Hayashizaki Y."/>
            <person name="Johnson-Hopson C."/>
            <person name="Hsuan V.W."/>
            <person name="Iida K."/>
            <person name="Karnes M."/>
            <person name="Khan S."/>
            <person name="Koesema E."/>
            <person name="Ishida J."/>
            <person name="Jiang P.X."/>
            <person name="Jones T."/>
            <person name="Kawai J."/>
            <person name="Kamiya A."/>
            <person name="Meyers C."/>
            <person name="Nakajima M."/>
            <person name="Narusaka M."/>
            <person name="Seki M."/>
            <person name="Sakurai T."/>
            <person name="Satou M."/>
            <person name="Tamse R."/>
            <person name="Vaysberg M."/>
            <person name="Wallender E.K."/>
            <person name="Wong C."/>
            <person name="Yamamura Y."/>
            <person name="Yuan S."/>
            <person name="Shinozaki K."/>
            <person name="Davis R.W."/>
            <person name="Theologis A."/>
            <person name="Ecker J.R."/>
        </authorList>
    </citation>
    <scope>NUCLEOTIDE SEQUENCE [LARGE SCALE MRNA]</scope>
    <source>
        <strain>cv. Columbia</strain>
    </source>
</reference>
<reference key="7">
    <citation type="submission" date="2002-03" db="EMBL/GenBank/DDBJ databases">
        <title>Full-length cDNA from Arabidopsis thaliana.</title>
        <authorList>
            <person name="Brover V.V."/>
            <person name="Troukhan M.E."/>
            <person name="Alexandrov N.A."/>
            <person name="Lu Y.-P."/>
            <person name="Flavell R.B."/>
            <person name="Feldmann K.A."/>
        </authorList>
    </citation>
    <scope>NUCLEOTIDE SEQUENCE [LARGE SCALE MRNA]</scope>
</reference>
<reference key="8">
    <citation type="journal article" date="2000" name="Plant Physiol.">
        <title>Coordinate regulation of the nuclear and plastidic genes coding for the subunits of the heteromeric acetyl-coenzyme A carboxylase.</title>
        <authorList>
            <person name="Ke J."/>
            <person name="Wen T.N."/>
            <person name="Nikolau B.J."/>
            <person name="Wurtele E.S."/>
        </authorList>
    </citation>
    <scope>TISSUE SPECIFICITY</scope>
    <source>
        <strain>cv. Columbia</strain>
    </source>
</reference>
<reference key="9">
    <citation type="journal article" date="2008" name="PLoS ONE">
        <title>Sorting signals, N-terminal modifications and abundance of the chloroplast proteome.</title>
        <authorList>
            <person name="Zybailov B."/>
            <person name="Rutschow H."/>
            <person name="Friso G."/>
            <person name="Rudella A."/>
            <person name="Emanuelsson O."/>
            <person name="Sun Q."/>
            <person name="van Wijk K.J."/>
        </authorList>
    </citation>
    <scope>IDENTIFICATION BY MASS SPECTROMETRY</scope>
    <scope>SUBCELLULAR LOCATION [LARGE SCALE ANALYSIS]</scope>
</reference>
<accession>Q42533</accession>
<accession>O04845</accession>
<accession>Q9LL78</accession>
<protein>
    <recommendedName>
        <fullName>Biotin carboxyl carrier protein of acetyl-CoA carboxylase 1, chloroplastic</fullName>
        <shortName>AtBCCP1</shortName>
        <shortName>BCCP-1</shortName>
    </recommendedName>
</protein>
<proteinExistence type="evidence at protein level"/>
<gene>
    <name type="primary">BCCP1</name>
    <name type="synonym">CAC1</name>
    <name type="ordered locus">At5g16390</name>
    <name type="ORF">MQK4.12</name>
</gene>
<organism>
    <name type="scientific">Arabidopsis thaliana</name>
    <name type="common">Mouse-ear cress</name>
    <dbReference type="NCBI Taxonomy" id="3702"/>
    <lineage>
        <taxon>Eukaryota</taxon>
        <taxon>Viridiplantae</taxon>
        <taxon>Streptophyta</taxon>
        <taxon>Embryophyta</taxon>
        <taxon>Tracheophyta</taxon>
        <taxon>Spermatophyta</taxon>
        <taxon>Magnoliopsida</taxon>
        <taxon>eudicotyledons</taxon>
        <taxon>Gunneridae</taxon>
        <taxon>Pentapetalae</taxon>
        <taxon>rosids</taxon>
        <taxon>malvids</taxon>
        <taxon>Brassicales</taxon>
        <taxon>Brassicaceae</taxon>
        <taxon>Camelineae</taxon>
        <taxon>Arabidopsis</taxon>
    </lineage>
</organism>
<sequence>MASSSFSVTSPAAAASVYAVTQTSSHFPIQNRSRRVSFRLSAKPKLRFLSKPSRSSYPVVKAQSNKVSTGASSNAAKVDGPSSAEGKEKNSLKESSASSPELATEESISEFLTQVTTLVKLVDSRDIVELQLKQLDCELVIRKKEALPQPQAPASYVMMQQPNQPSYAQQMAPPAAPAAAAPAPSTPASLPPPSPPTPAKSSLPTVKSPMAGTFYRSPAPGEPPFIKVGDKVQKGQVLCIVEAMKLMNEIESDHTGTVVDIVAEDGKPVSLDTPLFVVQP</sequence>